<name>AT1A_TETCF</name>
<feature type="propeptide" id="PRO_0000002509">
    <location>
        <begin position="1"/>
        <end position="5"/>
    </location>
</feature>
<feature type="chain" id="PRO_0000002510" description="Sodium/potassium-transporting ATPase subunit alpha">
    <location>
        <begin position="6"/>
        <end position="1022"/>
    </location>
</feature>
<feature type="topological domain" description="Cytoplasmic" evidence="2">
    <location>
        <begin position="6"/>
        <end position="87"/>
    </location>
</feature>
<feature type="transmembrane region" description="Helical" evidence="2">
    <location>
        <begin position="88"/>
        <end position="108"/>
    </location>
</feature>
<feature type="topological domain" description="Lumenal" evidence="2">
    <location>
        <begin position="109"/>
        <end position="131"/>
    </location>
</feature>
<feature type="transmembrane region" description="Helical" evidence="2">
    <location>
        <begin position="132"/>
        <end position="152"/>
    </location>
</feature>
<feature type="topological domain" description="Cytoplasmic" evidence="2">
    <location>
        <begin position="153"/>
        <end position="288"/>
    </location>
</feature>
<feature type="transmembrane region" description="Helical" evidence="2">
    <location>
        <begin position="289"/>
        <end position="308"/>
    </location>
</feature>
<feature type="topological domain" description="Lumenal" evidence="2">
    <location>
        <begin position="309"/>
        <end position="320"/>
    </location>
</feature>
<feature type="transmembrane region" description="Helical" evidence="2">
    <location>
        <begin position="321"/>
        <end position="338"/>
    </location>
</feature>
<feature type="topological domain" description="Cytoplasmic" evidence="2">
    <location>
        <begin position="339"/>
        <end position="771"/>
    </location>
</feature>
<feature type="transmembrane region" description="Helical" evidence="2">
    <location>
        <begin position="772"/>
        <end position="791"/>
    </location>
</feature>
<feature type="topological domain" description="Lumenal" evidence="2">
    <location>
        <begin position="792"/>
        <end position="801"/>
    </location>
</feature>
<feature type="transmembrane region" description="Helical" evidence="2">
    <location>
        <begin position="802"/>
        <end position="822"/>
    </location>
</feature>
<feature type="topological domain" description="Cytoplasmic" evidence="2">
    <location>
        <begin position="823"/>
        <end position="842"/>
    </location>
</feature>
<feature type="transmembrane region" description="Helical" evidence="2">
    <location>
        <begin position="843"/>
        <end position="865"/>
    </location>
</feature>
<feature type="topological domain" description="Lumenal" evidence="2">
    <location>
        <begin position="866"/>
        <end position="917"/>
    </location>
</feature>
<feature type="transmembrane region" description="Helical" evidence="2">
    <location>
        <begin position="918"/>
        <end position="937"/>
    </location>
</feature>
<feature type="topological domain" description="Cytoplasmic" evidence="2">
    <location>
        <begin position="938"/>
        <end position="950"/>
    </location>
</feature>
<feature type="transmembrane region" description="Helical" evidence="2">
    <location>
        <begin position="951"/>
        <end position="969"/>
    </location>
</feature>
<feature type="topological domain" description="Lumenal" evidence="2">
    <location>
        <begin position="970"/>
        <end position="984"/>
    </location>
</feature>
<feature type="transmembrane region" description="Helical" evidence="2">
    <location>
        <begin position="985"/>
        <end position="1005"/>
    </location>
</feature>
<feature type="topological domain" description="Cytoplasmic" evidence="2">
    <location>
        <begin position="1006"/>
        <end position="1022"/>
    </location>
</feature>
<feature type="region of interest" description="Disordered" evidence="3">
    <location>
        <begin position="1"/>
        <end position="34"/>
    </location>
</feature>
<feature type="region of interest" description="Interaction with phosphoinositide-3 kinase" evidence="1">
    <location>
        <begin position="82"/>
        <end position="84"/>
    </location>
</feature>
<feature type="region of interest" description="Disordered" evidence="3">
    <location>
        <begin position="215"/>
        <end position="235"/>
    </location>
</feature>
<feature type="active site" description="4-aspartylphosphate intermediate" evidence="1">
    <location>
        <position position="376"/>
    </location>
</feature>
<feature type="binding site" evidence="1">
    <location>
        <position position="716"/>
    </location>
    <ligand>
        <name>Mg(2+)</name>
        <dbReference type="ChEBI" id="CHEBI:18420"/>
    </ligand>
</feature>
<feature type="binding site" evidence="1">
    <location>
        <position position="720"/>
    </location>
    <ligand>
        <name>Mg(2+)</name>
        <dbReference type="ChEBI" id="CHEBI:18420"/>
    </ligand>
</feature>
<feature type="modified residue" description="Phosphoserine; by PKC" evidence="1">
    <location>
        <position position="16"/>
    </location>
</feature>
<feature type="modified residue" description="Phosphoserine; by PKA" evidence="1">
    <location>
        <position position="942"/>
    </location>
</feature>
<accession>P05025</accession>
<reference key="1">
    <citation type="journal article" date="1985" name="Nature">
        <title>Primary structure of the alpha-subunit of Torpedo californica (Na+ + K+)ATPase deduced from cDNA sequence.</title>
        <authorList>
            <person name="Kawakami K."/>
            <person name="Noguchi S."/>
            <person name="Noda M."/>
            <person name="Takahashi H."/>
            <person name="Ohta T."/>
            <person name="Kawamura M."/>
            <person name="Nojima H."/>
            <person name="Nagano K."/>
            <person name="Hirose T."/>
            <person name="Inayama S."/>
            <person name="Hayashida H."/>
            <person name="Miyata T."/>
            <person name="Numa S."/>
        </authorList>
    </citation>
    <scope>NUCLEOTIDE SEQUENCE [MRNA]</scope>
    <scope>PARTIAL PROTEIN SEQUENCE</scope>
</reference>
<reference key="2">
    <citation type="journal article" date="1986" name="Proc. Natl. Acad. Sci. U.S.A.">
        <title>The active site structure of Na+/K+-transporting ATPase: location of the 5'-(p-fluorosulfonyl)benzoyladenosine binding site and soluble peptides released by trypsin.</title>
        <authorList>
            <person name="Ohta T."/>
            <person name="Nagano K."/>
            <person name="Yoshida M."/>
        </authorList>
    </citation>
    <scope>PROTEIN SEQUENCE OF 386-402; 502-512; 671-689 AND 887-906</scope>
</reference>
<dbReference type="EC" id="7.2.2.13"/>
<dbReference type="EMBL" id="X02810">
    <property type="protein sequence ID" value="CAA26578.1"/>
    <property type="molecule type" value="mRNA"/>
</dbReference>
<dbReference type="PIR" id="S00503">
    <property type="entry name" value="S00503"/>
</dbReference>
<dbReference type="SMR" id="P05025"/>
<dbReference type="GO" id="GO:0005886">
    <property type="term" value="C:plasma membrane"/>
    <property type="evidence" value="ECO:0007669"/>
    <property type="project" value="UniProtKB-SubCell"/>
</dbReference>
<dbReference type="GO" id="GO:0005524">
    <property type="term" value="F:ATP binding"/>
    <property type="evidence" value="ECO:0007669"/>
    <property type="project" value="UniProtKB-KW"/>
</dbReference>
<dbReference type="GO" id="GO:0016887">
    <property type="term" value="F:ATP hydrolysis activity"/>
    <property type="evidence" value="ECO:0007669"/>
    <property type="project" value="InterPro"/>
</dbReference>
<dbReference type="GO" id="GO:0046872">
    <property type="term" value="F:metal ion binding"/>
    <property type="evidence" value="ECO:0007669"/>
    <property type="project" value="UniProtKB-KW"/>
</dbReference>
<dbReference type="GO" id="GO:0005391">
    <property type="term" value="F:P-type sodium:potassium-exchanging transporter activity"/>
    <property type="evidence" value="ECO:0007669"/>
    <property type="project" value="UniProtKB-EC"/>
</dbReference>
<dbReference type="GO" id="GO:0030007">
    <property type="term" value="P:intracellular potassium ion homeostasis"/>
    <property type="evidence" value="ECO:0007669"/>
    <property type="project" value="TreeGrafter"/>
</dbReference>
<dbReference type="GO" id="GO:0006883">
    <property type="term" value="P:intracellular sodium ion homeostasis"/>
    <property type="evidence" value="ECO:0007669"/>
    <property type="project" value="TreeGrafter"/>
</dbReference>
<dbReference type="GO" id="GO:1990573">
    <property type="term" value="P:potassium ion import across plasma membrane"/>
    <property type="evidence" value="ECO:0007669"/>
    <property type="project" value="TreeGrafter"/>
</dbReference>
<dbReference type="GO" id="GO:1902600">
    <property type="term" value="P:proton transmembrane transport"/>
    <property type="evidence" value="ECO:0007669"/>
    <property type="project" value="TreeGrafter"/>
</dbReference>
<dbReference type="GO" id="GO:0036376">
    <property type="term" value="P:sodium ion export across plasma membrane"/>
    <property type="evidence" value="ECO:0007669"/>
    <property type="project" value="TreeGrafter"/>
</dbReference>
<dbReference type="CDD" id="cd02608">
    <property type="entry name" value="P-type_ATPase_Na-K_like"/>
    <property type="match status" value="1"/>
</dbReference>
<dbReference type="FunFam" id="2.70.150.10:FF:000106">
    <property type="entry name" value="Sodium/potassium-transporting ATPase subunit alpha"/>
    <property type="match status" value="1"/>
</dbReference>
<dbReference type="FunFam" id="3.40.1110.10:FF:000001">
    <property type="entry name" value="Sodium/potassium-transporting ATPase subunit alpha"/>
    <property type="match status" value="1"/>
</dbReference>
<dbReference type="FunFam" id="3.40.50.1000:FF:000004">
    <property type="entry name" value="Sodium/potassium-transporting ATPase subunit alpha"/>
    <property type="match status" value="1"/>
</dbReference>
<dbReference type="FunFam" id="1.20.1110.10:FF:000095">
    <property type="entry name" value="Sodium/potassium-transporting ATPase subunit alpha-1"/>
    <property type="match status" value="2"/>
</dbReference>
<dbReference type="Gene3D" id="3.40.1110.10">
    <property type="entry name" value="Calcium-transporting ATPase, cytoplasmic domain N"/>
    <property type="match status" value="1"/>
</dbReference>
<dbReference type="Gene3D" id="2.70.150.10">
    <property type="entry name" value="Calcium-transporting ATPase, cytoplasmic transduction domain A"/>
    <property type="match status" value="1"/>
</dbReference>
<dbReference type="Gene3D" id="1.20.1110.10">
    <property type="entry name" value="Calcium-transporting ATPase, transmembrane domain"/>
    <property type="match status" value="1"/>
</dbReference>
<dbReference type="Gene3D" id="3.40.50.1000">
    <property type="entry name" value="HAD superfamily/HAD-like"/>
    <property type="match status" value="1"/>
</dbReference>
<dbReference type="InterPro" id="IPR006068">
    <property type="entry name" value="ATPase_P-typ_cation-transptr_C"/>
</dbReference>
<dbReference type="InterPro" id="IPR004014">
    <property type="entry name" value="ATPase_P-typ_cation-transptr_N"/>
</dbReference>
<dbReference type="InterPro" id="IPR023299">
    <property type="entry name" value="ATPase_P-typ_cyto_dom_N"/>
</dbReference>
<dbReference type="InterPro" id="IPR018303">
    <property type="entry name" value="ATPase_P-typ_P_site"/>
</dbReference>
<dbReference type="InterPro" id="IPR023298">
    <property type="entry name" value="ATPase_P-typ_TM_dom_sf"/>
</dbReference>
<dbReference type="InterPro" id="IPR008250">
    <property type="entry name" value="ATPase_P-typ_transduc_dom_A_sf"/>
</dbReference>
<dbReference type="InterPro" id="IPR050510">
    <property type="entry name" value="Cation_transp_ATPase_P-type"/>
</dbReference>
<dbReference type="InterPro" id="IPR036412">
    <property type="entry name" value="HAD-like_sf"/>
</dbReference>
<dbReference type="InterPro" id="IPR023214">
    <property type="entry name" value="HAD_sf"/>
</dbReference>
<dbReference type="InterPro" id="IPR005775">
    <property type="entry name" value="P-type_ATPase_IIC"/>
</dbReference>
<dbReference type="InterPro" id="IPR001757">
    <property type="entry name" value="P_typ_ATPase"/>
</dbReference>
<dbReference type="InterPro" id="IPR044492">
    <property type="entry name" value="P_typ_ATPase_HD_dom"/>
</dbReference>
<dbReference type="NCBIfam" id="TIGR01106">
    <property type="entry name" value="ATPase-IIC_X-K"/>
    <property type="match status" value="1"/>
</dbReference>
<dbReference type="NCBIfam" id="TIGR01494">
    <property type="entry name" value="ATPase_P-type"/>
    <property type="match status" value="2"/>
</dbReference>
<dbReference type="PANTHER" id="PTHR43294">
    <property type="entry name" value="SODIUM/POTASSIUM-TRANSPORTING ATPASE SUBUNIT ALPHA"/>
    <property type="match status" value="1"/>
</dbReference>
<dbReference type="PANTHER" id="PTHR43294:SF9">
    <property type="entry name" value="SODIUM_POTASSIUM-TRANSPORTING ATPASE SUBUNIT ALPHA-1"/>
    <property type="match status" value="1"/>
</dbReference>
<dbReference type="Pfam" id="PF13246">
    <property type="entry name" value="Cation_ATPase"/>
    <property type="match status" value="1"/>
</dbReference>
<dbReference type="Pfam" id="PF00689">
    <property type="entry name" value="Cation_ATPase_C"/>
    <property type="match status" value="1"/>
</dbReference>
<dbReference type="Pfam" id="PF00690">
    <property type="entry name" value="Cation_ATPase_N"/>
    <property type="match status" value="1"/>
</dbReference>
<dbReference type="Pfam" id="PF00122">
    <property type="entry name" value="E1-E2_ATPase"/>
    <property type="match status" value="1"/>
</dbReference>
<dbReference type="Pfam" id="PF00702">
    <property type="entry name" value="Hydrolase"/>
    <property type="match status" value="1"/>
</dbReference>
<dbReference type="PRINTS" id="PR00119">
    <property type="entry name" value="CATATPASE"/>
</dbReference>
<dbReference type="PRINTS" id="PR00121">
    <property type="entry name" value="NAKATPASE"/>
</dbReference>
<dbReference type="SFLD" id="SFLDG00002">
    <property type="entry name" value="C1.7:_P-type_atpase_like"/>
    <property type="match status" value="1"/>
</dbReference>
<dbReference type="SFLD" id="SFLDF00027">
    <property type="entry name" value="p-type_atpase"/>
    <property type="match status" value="1"/>
</dbReference>
<dbReference type="SMART" id="SM00831">
    <property type="entry name" value="Cation_ATPase_N"/>
    <property type="match status" value="1"/>
</dbReference>
<dbReference type="SUPFAM" id="SSF81653">
    <property type="entry name" value="Calcium ATPase, transduction domain A"/>
    <property type="match status" value="1"/>
</dbReference>
<dbReference type="SUPFAM" id="SSF81665">
    <property type="entry name" value="Calcium ATPase, transmembrane domain M"/>
    <property type="match status" value="1"/>
</dbReference>
<dbReference type="SUPFAM" id="SSF56784">
    <property type="entry name" value="HAD-like"/>
    <property type="match status" value="1"/>
</dbReference>
<dbReference type="SUPFAM" id="SSF81660">
    <property type="entry name" value="Metal cation-transporting ATPase, ATP-binding domain N"/>
    <property type="match status" value="1"/>
</dbReference>
<dbReference type="PROSITE" id="PS00154">
    <property type="entry name" value="ATPASE_E1_E2"/>
    <property type="match status" value="1"/>
</dbReference>
<organism>
    <name type="scientific">Tetronarce californica</name>
    <name type="common">Pacific electric ray</name>
    <name type="synonym">Torpedo californica</name>
    <dbReference type="NCBI Taxonomy" id="7787"/>
    <lineage>
        <taxon>Eukaryota</taxon>
        <taxon>Metazoa</taxon>
        <taxon>Chordata</taxon>
        <taxon>Craniata</taxon>
        <taxon>Vertebrata</taxon>
        <taxon>Chondrichthyes</taxon>
        <taxon>Elasmobranchii</taxon>
        <taxon>Batoidea</taxon>
        <taxon>Torpediniformes</taxon>
        <taxon>Torpedinidae</taxon>
        <taxon>Tetronarce</taxon>
    </lineage>
</organism>
<keyword id="KW-0067">ATP-binding</keyword>
<keyword id="KW-1003">Cell membrane</keyword>
<keyword id="KW-0903">Direct protein sequencing</keyword>
<keyword id="KW-0406">Ion transport</keyword>
<keyword id="KW-0460">Magnesium</keyword>
<keyword id="KW-0472">Membrane</keyword>
<keyword id="KW-0479">Metal-binding</keyword>
<keyword id="KW-0547">Nucleotide-binding</keyword>
<keyword id="KW-0597">Phosphoprotein</keyword>
<keyword id="KW-0630">Potassium</keyword>
<keyword id="KW-0633">Potassium transport</keyword>
<keyword id="KW-0915">Sodium</keyword>
<keyword id="KW-0739">Sodium transport</keyword>
<keyword id="KW-0740">Sodium/potassium transport</keyword>
<keyword id="KW-1278">Translocase</keyword>
<keyword id="KW-0812">Transmembrane</keyword>
<keyword id="KW-1133">Transmembrane helix</keyword>
<keyword id="KW-0813">Transport</keyword>
<comment type="function">
    <text>This is the catalytic component of the active enzyme, which catalyzes the hydrolysis of ATP coupled with the exchange of sodium and potassium ions across the plasma membrane. This action creates the electrochemical gradient of sodium and potassium ions, providing the energy for active transport of various nutrients.</text>
</comment>
<comment type="catalytic activity">
    <reaction>
        <text>K(+)(out) + Na(+)(in) + ATP + H2O = K(+)(in) + Na(+)(out) + ADP + phosphate + H(+)</text>
        <dbReference type="Rhea" id="RHEA:18353"/>
        <dbReference type="ChEBI" id="CHEBI:15377"/>
        <dbReference type="ChEBI" id="CHEBI:15378"/>
        <dbReference type="ChEBI" id="CHEBI:29101"/>
        <dbReference type="ChEBI" id="CHEBI:29103"/>
        <dbReference type="ChEBI" id="CHEBI:30616"/>
        <dbReference type="ChEBI" id="CHEBI:43474"/>
        <dbReference type="ChEBI" id="CHEBI:456216"/>
        <dbReference type="EC" id="7.2.2.13"/>
    </reaction>
</comment>
<comment type="subunit">
    <text evidence="4">The sodium/potassium-transporting ATPase is composed of a catalytic alpha subunit, an auxiliary non-catalytic beta subunit and an additional regulatory subunit.</text>
</comment>
<comment type="subcellular location">
    <subcellularLocation>
        <location evidence="4">Cell membrane</location>
        <topology>Multi-pass membrane protein</topology>
    </subcellularLocation>
</comment>
<comment type="similarity">
    <text evidence="4">Belongs to the cation transport ATPase (P-type) (TC 3.A.3) family. Type IIC subfamily.</text>
</comment>
<sequence>MGKGAASEKYQPAATSENAKNSKKSKSKTTDLDELKKEVSLDDHKLNLDELHQKYGTDLTQGLTPARAKEILARDGPNALTPPPTTPEWIKFCRQLFGGFSILLWTGAILCFLAYGIQVATVDNPANDNLYLGVVLSTVVIITGCFSYYQEAKSSKIMDSFKNMVPQQALVIRDGEKSSINAEQVVVGDLVEVKGGDRIPADLRIISACSCKVDNSSLTGESEPQSRSPEYSSENPLETKNIAFFSTNCVEGTARGIVINIGDHTVMGRIATLASGLEVGQTPIAAEIEHFIHIITGVAVFLGVSFFILSLILGYTWLEAVIFLIGIIVANVPEGLLATVTVCLTLTAKRMARKNCLVKNLEAVETLGSTSTICSDKTGTLTQNRMTVAHMWFDNQIHEADTTENQSGISFDKTSLSWNALSRIAALCNRAVFQAGQDSVPILKRSVAGDASESALLKCIELCCGSVSQMRDRNPKIVEIPFNSTNKYQLSIHENDKADSRYLLVMKGAPERILDRCSTILLNGEDKPLNEEMKEAFQNAYLELGGLGERVLGFCHLKLSTSKFPEGYPFDVEEPNFPITDLCFVGLMSMIDPPRAAVPDAVGKCRSAGIKVIMVTGDHPITAKAIAKGVGIISEGNETVEDIAARLNIPVNQVNPRDAKACVVHGTDLKDLSHENLDDILHYHTEIVFARTSPQQKLIIVEGCQRQGAIVAVTGDGVNDSPALKKADIGVAMGIAGSDVSKQAADMILLDDNFASIVTGVEEGRLIFDNLKKSIAYTLTSNIPEITPFLVFIIANVPLPLGTVTILCIDLGTDMVPAISLAYERAESDIMKRQPRNPKTDKLVNERLISMAYGQIGMIQALGGFFSYFVILAENGFLPIDLIGIREKWDELWTQDLEDSYGQQWTYEQRKIVEYTCHTSFFVSIVIVQWADLIICKTRRNSIFQQGMKNKILIFGLFEETALAAFLSYTPGTDIALRMYPLKPSWWFCAFPYSLIIFLYDEARRFILRRNPGGWVEQETYY</sequence>
<protein>
    <recommendedName>
        <fullName>Sodium/potassium-transporting ATPase subunit alpha</fullName>
        <shortName>Na(+)/K(+) ATPase alpha subunit</shortName>
        <ecNumber>7.2.2.13</ecNumber>
    </recommendedName>
    <alternativeName>
        <fullName>Sodium pump subunit alpha</fullName>
    </alternativeName>
</protein>
<proteinExistence type="evidence at protein level"/>
<evidence type="ECO:0000250" key="1"/>
<evidence type="ECO:0000255" key="2"/>
<evidence type="ECO:0000256" key="3">
    <source>
        <dbReference type="SAM" id="MobiDB-lite"/>
    </source>
</evidence>
<evidence type="ECO:0000305" key="4"/>